<dbReference type="EC" id="2.7.7.60" evidence="1"/>
<dbReference type="EMBL" id="CP000438">
    <property type="protein sequence ID" value="ABJ12866.1"/>
    <property type="molecule type" value="Genomic_DNA"/>
</dbReference>
<dbReference type="RefSeq" id="WP_003138030.1">
    <property type="nucleotide sequence ID" value="NZ_CP034244.1"/>
</dbReference>
<dbReference type="SMR" id="Q02RA5"/>
<dbReference type="KEGG" id="pau:PA14_17340"/>
<dbReference type="PseudoCAP" id="PA14_17340"/>
<dbReference type="HOGENOM" id="CLU_061281_3_1_6"/>
<dbReference type="BioCyc" id="PAER208963:G1G74-1428-MONOMER"/>
<dbReference type="UniPathway" id="UPA00056">
    <property type="reaction ID" value="UER00093"/>
</dbReference>
<dbReference type="Proteomes" id="UP000000653">
    <property type="component" value="Chromosome"/>
</dbReference>
<dbReference type="GO" id="GO:0050518">
    <property type="term" value="F:2-C-methyl-D-erythritol 4-phosphate cytidylyltransferase activity"/>
    <property type="evidence" value="ECO:0007669"/>
    <property type="project" value="UniProtKB-UniRule"/>
</dbReference>
<dbReference type="GO" id="GO:0019288">
    <property type="term" value="P:isopentenyl diphosphate biosynthetic process, methylerythritol 4-phosphate pathway"/>
    <property type="evidence" value="ECO:0007669"/>
    <property type="project" value="UniProtKB-UniRule"/>
</dbReference>
<dbReference type="CDD" id="cd02516">
    <property type="entry name" value="CDP-ME_synthetase"/>
    <property type="match status" value="1"/>
</dbReference>
<dbReference type="FunFam" id="3.90.550.10:FF:000003">
    <property type="entry name" value="2-C-methyl-D-erythritol 4-phosphate cytidylyltransferase"/>
    <property type="match status" value="1"/>
</dbReference>
<dbReference type="Gene3D" id="3.90.550.10">
    <property type="entry name" value="Spore Coat Polysaccharide Biosynthesis Protein SpsA, Chain A"/>
    <property type="match status" value="1"/>
</dbReference>
<dbReference type="HAMAP" id="MF_00108">
    <property type="entry name" value="IspD"/>
    <property type="match status" value="1"/>
</dbReference>
<dbReference type="InterPro" id="IPR001228">
    <property type="entry name" value="IspD"/>
</dbReference>
<dbReference type="InterPro" id="IPR034683">
    <property type="entry name" value="IspD/TarI"/>
</dbReference>
<dbReference type="InterPro" id="IPR050088">
    <property type="entry name" value="IspD/TarI_cytidylyltransf_bact"/>
</dbReference>
<dbReference type="InterPro" id="IPR018294">
    <property type="entry name" value="ISPD_synthase_CS"/>
</dbReference>
<dbReference type="InterPro" id="IPR029044">
    <property type="entry name" value="Nucleotide-diphossugar_trans"/>
</dbReference>
<dbReference type="NCBIfam" id="TIGR00453">
    <property type="entry name" value="ispD"/>
    <property type="match status" value="1"/>
</dbReference>
<dbReference type="PANTHER" id="PTHR32125">
    <property type="entry name" value="2-C-METHYL-D-ERYTHRITOL 4-PHOSPHATE CYTIDYLYLTRANSFERASE, CHLOROPLASTIC"/>
    <property type="match status" value="1"/>
</dbReference>
<dbReference type="PANTHER" id="PTHR32125:SF4">
    <property type="entry name" value="2-C-METHYL-D-ERYTHRITOL 4-PHOSPHATE CYTIDYLYLTRANSFERASE, CHLOROPLASTIC"/>
    <property type="match status" value="1"/>
</dbReference>
<dbReference type="Pfam" id="PF01128">
    <property type="entry name" value="IspD"/>
    <property type="match status" value="1"/>
</dbReference>
<dbReference type="SUPFAM" id="SSF53448">
    <property type="entry name" value="Nucleotide-diphospho-sugar transferases"/>
    <property type="match status" value="1"/>
</dbReference>
<dbReference type="PROSITE" id="PS01295">
    <property type="entry name" value="ISPD"/>
    <property type="match status" value="1"/>
</dbReference>
<name>ISPD_PSEAB</name>
<comment type="function">
    <text evidence="1">Catalyzes the formation of 4-diphosphocytidyl-2-C-methyl-D-erythritol from CTP and 2-C-methyl-D-erythritol 4-phosphate (MEP).</text>
</comment>
<comment type="catalytic activity">
    <reaction evidence="1">
        <text>2-C-methyl-D-erythritol 4-phosphate + CTP + H(+) = 4-CDP-2-C-methyl-D-erythritol + diphosphate</text>
        <dbReference type="Rhea" id="RHEA:13429"/>
        <dbReference type="ChEBI" id="CHEBI:15378"/>
        <dbReference type="ChEBI" id="CHEBI:33019"/>
        <dbReference type="ChEBI" id="CHEBI:37563"/>
        <dbReference type="ChEBI" id="CHEBI:57823"/>
        <dbReference type="ChEBI" id="CHEBI:58262"/>
        <dbReference type="EC" id="2.7.7.60"/>
    </reaction>
</comment>
<comment type="pathway">
    <text evidence="1">Isoprenoid biosynthesis; isopentenyl diphosphate biosynthesis via DXP pathway; isopentenyl diphosphate from 1-deoxy-D-xylulose 5-phosphate: step 2/6.</text>
</comment>
<comment type="similarity">
    <text evidence="1">Belongs to the IspD/TarI cytidylyltransferase family. IspD subfamily.</text>
</comment>
<evidence type="ECO:0000255" key="1">
    <source>
        <dbReference type="HAMAP-Rule" id="MF_00108"/>
    </source>
</evidence>
<reference key="1">
    <citation type="journal article" date="2006" name="Genome Biol.">
        <title>Genomic analysis reveals that Pseudomonas aeruginosa virulence is combinatorial.</title>
        <authorList>
            <person name="Lee D.G."/>
            <person name="Urbach J.M."/>
            <person name="Wu G."/>
            <person name="Liberati N.T."/>
            <person name="Feinbaum R.L."/>
            <person name="Miyata S."/>
            <person name="Diggins L.T."/>
            <person name="He J."/>
            <person name="Saucier M."/>
            <person name="Deziel E."/>
            <person name="Friedman L."/>
            <person name="Li L."/>
            <person name="Grills G."/>
            <person name="Montgomery K."/>
            <person name="Kucherlapati R."/>
            <person name="Rahme L.G."/>
            <person name="Ausubel F.M."/>
        </authorList>
    </citation>
    <scope>NUCLEOTIDE SEQUENCE [LARGE SCALE GENOMIC DNA]</scope>
    <source>
        <strain>UCBPP-PA14</strain>
    </source>
</reference>
<proteinExistence type="inferred from homology"/>
<feature type="chain" id="PRO_1000022939" description="2-C-methyl-D-erythritol 4-phosphate cytidylyltransferase">
    <location>
        <begin position="1"/>
        <end position="234"/>
    </location>
</feature>
<feature type="site" description="Transition state stabilizer" evidence="1">
    <location>
        <position position="21"/>
    </location>
</feature>
<feature type="site" description="Transition state stabilizer" evidence="1">
    <location>
        <position position="28"/>
    </location>
</feature>
<feature type="site" description="Positions MEP for the nucleophilic attack" evidence="1">
    <location>
        <position position="162"/>
    </location>
</feature>
<feature type="site" description="Positions MEP for the nucleophilic attack" evidence="1">
    <location>
        <position position="218"/>
    </location>
</feature>
<accession>Q02RA5</accession>
<protein>
    <recommendedName>
        <fullName evidence="1">2-C-methyl-D-erythritol 4-phosphate cytidylyltransferase</fullName>
        <ecNumber evidence="1">2.7.7.60</ecNumber>
    </recommendedName>
    <alternativeName>
        <fullName evidence="1">4-diphosphocytidyl-2C-methyl-D-erythritol synthase</fullName>
    </alternativeName>
    <alternativeName>
        <fullName evidence="1">MEP cytidylyltransferase</fullName>
        <shortName evidence="1">MCT</shortName>
    </alternativeName>
</protein>
<organism>
    <name type="scientific">Pseudomonas aeruginosa (strain UCBPP-PA14)</name>
    <dbReference type="NCBI Taxonomy" id="208963"/>
    <lineage>
        <taxon>Bacteria</taxon>
        <taxon>Pseudomonadati</taxon>
        <taxon>Pseudomonadota</taxon>
        <taxon>Gammaproteobacteria</taxon>
        <taxon>Pseudomonadales</taxon>
        <taxon>Pseudomonadaceae</taxon>
        <taxon>Pseudomonas</taxon>
    </lineage>
</organism>
<keyword id="KW-0414">Isoprene biosynthesis</keyword>
<keyword id="KW-0548">Nucleotidyltransferase</keyword>
<keyword id="KW-0808">Transferase</keyword>
<gene>
    <name evidence="1" type="primary">ispD</name>
    <name type="ordered locus">PA14_17340</name>
</gene>
<sequence length="234" mass="25656">MTTSDLPAFWTVIPAAGVGSRMRADRPKQYLDLAGRTVIERTLDCFLEHPMLRGLVVCLAEDDPYWPGLDCAASRHVQRAAGGVERADSVLSGLLRLLELGAQADDWVLVHDAARPNLTRGDLDRLLEELAEDPVGGLLAVPARDTLKRADRDGRVSETIDRSVVWLAYTPQMFRLGALHRALADALVAGVAITDEASAMEWAGYAPKLVEGRADNLKITTPEDLLRLQRSFPH</sequence>